<feature type="signal peptide" evidence="1">
    <location>
        <begin position="1"/>
        <end position="20"/>
    </location>
</feature>
<feature type="chain" id="PRO_5003780845" description="Secreted LysM effector Blys2">
    <location>
        <begin position="21"/>
        <end position="409"/>
    </location>
</feature>
<feature type="domain" description="LysM 1" evidence="3">
    <location>
        <begin position="24"/>
        <end position="71"/>
    </location>
</feature>
<feature type="domain" description="LysM 2" evidence="3">
    <location>
        <begin position="129"/>
        <end position="176"/>
    </location>
</feature>
<feature type="domain" description="LysM 3" evidence="3">
    <location>
        <begin position="206"/>
        <end position="253"/>
    </location>
</feature>
<feature type="domain" description="LysM 4" evidence="3">
    <location>
        <begin position="283"/>
        <end position="330"/>
    </location>
</feature>
<feature type="domain" description="LysM 5" evidence="3">
    <location>
        <begin position="357"/>
        <end position="405"/>
    </location>
</feature>
<feature type="region of interest" description="Disordered" evidence="4">
    <location>
        <begin position="74"/>
        <end position="111"/>
    </location>
</feature>
<feature type="compositionally biased region" description="Low complexity" evidence="4">
    <location>
        <begin position="87"/>
        <end position="106"/>
    </location>
</feature>
<feature type="glycosylation site" description="N-linked (GlcNAc...) asparagine" evidence="2">
    <location>
        <position position="58"/>
    </location>
</feature>
<keyword id="KW-0134">Cell wall</keyword>
<keyword id="KW-0147">Chitin-binding</keyword>
<keyword id="KW-0325">Glycoprotein</keyword>
<keyword id="KW-1185">Reference proteome</keyword>
<keyword id="KW-0677">Repeat</keyword>
<keyword id="KW-0964">Secreted</keyword>
<keyword id="KW-0732">Signal</keyword>
<keyword id="KW-0843">Virulence</keyword>
<gene>
    <name evidence="6" type="primary">Blys2</name>
    <name type="ORF">BBA_03138</name>
</gene>
<evidence type="ECO:0000255" key="1"/>
<evidence type="ECO:0000255" key="2">
    <source>
        <dbReference type="PROSITE-ProRule" id="PRU00498"/>
    </source>
</evidence>
<evidence type="ECO:0000255" key="3">
    <source>
        <dbReference type="PROSITE-ProRule" id="PRU01118"/>
    </source>
</evidence>
<evidence type="ECO:0000256" key="4">
    <source>
        <dbReference type="SAM" id="MobiDB-lite"/>
    </source>
</evidence>
<evidence type="ECO:0000269" key="5">
    <source>
    </source>
</evidence>
<evidence type="ECO:0000303" key="6">
    <source>
    </source>
</evidence>
<evidence type="ECO:0000305" key="7"/>
<evidence type="ECO:0000305" key="8">
    <source>
    </source>
</evidence>
<comment type="function">
    <text evidence="5">Secreted effector that enables the plant pathogenic fungus to manipulate host defenses for successful infection (PubMed:28873459). Required for the full virulence to infect insect hosts (PubMed:28873459). In contrast to Blys5, Blys2 is not able to protect fungal hyphae against the hydrolytic activity of chitinase but plays an important role in evasion of insect immunities (PubMed:28873459). Binds chitin (PubMed:28873459). Coats and protects the cell walls of insect pathogens from host cell recognition (PubMed:28873459).</text>
</comment>
<comment type="subcellular location">
    <subcellularLocation>
        <location evidence="5">Secreted</location>
    </subcellularLocation>
    <subcellularLocation>
        <location evidence="5">Secreted</location>
        <location evidence="5">Cell wall</location>
    </subcellularLocation>
</comment>
<comment type="induction">
    <text evidence="5">Expressed during in vivo infection of insect hosts.</text>
</comment>
<comment type="domain">
    <text evidence="5">The LysM1 domain might affect the protein binding specificity whereas the LysM2 and LysM3 domains might determine the protein's chitin-binding affinity.</text>
</comment>
<comment type="domain">
    <text evidence="8">The LysM (lysin motif) domains are small globular domains involved in binding chitin in eukaryotes. Blys2 contains 5 LysM domains.</text>
</comment>
<comment type="disruption phenotype">
    <text evidence="5">Lead to relative tolerance against H(2)O(2)-induced oxidative stress (PubMed:28873459). Impaired fungal virulence in both injection and topical infection bioassays using the last instar larvae of the wax moth Galleria mellonella (PubMed:28873459). Impairs fungal propagations and ability in suppressing immune responses in insects (PubMed:28873459).</text>
</comment>
<comment type="miscellaneous">
    <text evidence="7">In plants, chitin acts as a microbe-associated molecular pattern (MAMP) that is recognized by lysin motif (LysM)-containing plant cell surface-localized pattern recognition receptors (PRRs) that activate a plethora of downstream immune responses.</text>
</comment>
<comment type="similarity">
    <text evidence="7">Belongs to the secreted LysM effector family.</text>
</comment>
<sequence length="409" mass="43694">MTRFTTTLVAALAGANLAAAKCSYKWRAHAGDTCDSLSSDWSVQVSDFIKWNPSVGANCSNGVTAGQEYCVEDNGAGSKPTTPPTGSPTTLTTAVTTASSTPTQPTDGAPSPIQDGVAKDCKSAHSCKAWYKVQAGDTCDKIVSKYGAFSTDDFLKWNPAAGSDCTGLWVDYYVCVGVAGTPTSPTGSNPSKPSSTQAGVAKDCQKWYKVKSGDTCDKIKNQFNTFSLDDFLKWNPAAGKDCSGLWVDYFVCVGVPGTPTSPTGSDPSKPSPTQDGLTDKCTKFYKAQKGDTCQKIVDSLRTFTVSEFTSWNPAVGKDCTGIWVDYYYCIAVPGTPANPGPVRPSPVQDGITSKCNKYYKVQSGDYCDKIINKYNKAFNLEQLVSWNPAIGKDCSHLFVDFYICVGVQG</sequence>
<proteinExistence type="evidence at transcript level"/>
<accession>J4URT3</accession>
<protein>
    <recommendedName>
        <fullName evidence="6">Secreted LysM effector Blys2</fullName>
    </recommendedName>
    <alternativeName>
        <fullName evidence="6">LysM domain-containing protein 2</fullName>
    </alternativeName>
</protein>
<reference key="1">
    <citation type="journal article" date="2012" name="Sci. Rep.">
        <title>Genomic perspectives on the evolution of fungal entomopathogenicity in Beauveria bassiana.</title>
        <authorList>
            <person name="Xiao G."/>
            <person name="Ying S.-H."/>
            <person name="Zheng P."/>
            <person name="Wang Z.-L."/>
            <person name="Zhang S."/>
            <person name="Xie X.-Q."/>
            <person name="Shang Y."/>
            <person name="St Leger R.J."/>
            <person name="Zhao G.-P."/>
            <person name="Wang C."/>
            <person name="Feng M.-G."/>
        </authorList>
    </citation>
    <scope>NUCLEOTIDE SEQUENCE [LARGE SCALE GENOMIC DNA]</scope>
    <source>
        <strain>ARSEF 2860</strain>
    </source>
</reference>
<reference key="2">
    <citation type="journal article" date="2017" name="PLoS Pathog.">
        <title>Divergent LysM effectors contribute to the virulence of Beauveria bassiana by evasion of insect immune defenses.</title>
        <authorList>
            <person name="Cen K."/>
            <person name="Li B."/>
            <person name="Lu Y."/>
            <person name="Zhang S."/>
            <person name="Wang C."/>
        </authorList>
    </citation>
    <scope>FUNCTION</scope>
    <scope>DOMAIN</scope>
    <scope>INDUCTION</scope>
    <scope>DISRUPTION PHENOTYPE</scope>
    <scope>SUBCELLULAR LOCATION</scope>
</reference>
<name>LYSM2_BEAB2</name>
<organism>
    <name type="scientific">Beauveria bassiana (strain ARSEF 2860)</name>
    <name type="common">White muscardine disease fungus</name>
    <name type="synonym">Tritirachium shiotae</name>
    <dbReference type="NCBI Taxonomy" id="655819"/>
    <lineage>
        <taxon>Eukaryota</taxon>
        <taxon>Fungi</taxon>
        <taxon>Dikarya</taxon>
        <taxon>Ascomycota</taxon>
        <taxon>Pezizomycotina</taxon>
        <taxon>Sordariomycetes</taxon>
        <taxon>Hypocreomycetidae</taxon>
        <taxon>Hypocreales</taxon>
        <taxon>Cordycipitaceae</taxon>
        <taxon>Beauveria</taxon>
    </lineage>
</organism>
<dbReference type="EMBL" id="JH725155">
    <property type="protein sequence ID" value="EJP68242.1"/>
    <property type="molecule type" value="Genomic_DNA"/>
</dbReference>
<dbReference type="RefSeq" id="XP_008596457.1">
    <property type="nucleotide sequence ID" value="XM_008598235.1"/>
</dbReference>
<dbReference type="SMR" id="J4URT3"/>
<dbReference type="STRING" id="655819.J4URT3"/>
<dbReference type="GeneID" id="19886150"/>
<dbReference type="HOGENOM" id="CLU_010591_8_2_1"/>
<dbReference type="InParanoid" id="J4URT3"/>
<dbReference type="OrthoDB" id="7303at474943"/>
<dbReference type="PHI-base" id="PHI:7376"/>
<dbReference type="Proteomes" id="UP000002762">
    <property type="component" value="Unassembled WGS sequence"/>
</dbReference>
<dbReference type="GO" id="GO:0005576">
    <property type="term" value="C:extracellular region"/>
    <property type="evidence" value="ECO:0007669"/>
    <property type="project" value="UniProtKB-SubCell"/>
</dbReference>
<dbReference type="GO" id="GO:0008061">
    <property type="term" value="F:chitin binding"/>
    <property type="evidence" value="ECO:0007669"/>
    <property type="project" value="UniProtKB-KW"/>
</dbReference>
<dbReference type="CDD" id="cd00118">
    <property type="entry name" value="LysM"/>
    <property type="match status" value="5"/>
</dbReference>
<dbReference type="Gene3D" id="3.10.350.10">
    <property type="entry name" value="LysM domain"/>
    <property type="match status" value="5"/>
</dbReference>
<dbReference type="InterPro" id="IPR052210">
    <property type="entry name" value="LysM1-like"/>
</dbReference>
<dbReference type="InterPro" id="IPR018392">
    <property type="entry name" value="LysM_dom"/>
</dbReference>
<dbReference type="InterPro" id="IPR036779">
    <property type="entry name" value="LysM_dom_sf"/>
</dbReference>
<dbReference type="PANTHER" id="PTHR34997">
    <property type="entry name" value="AM15"/>
    <property type="match status" value="1"/>
</dbReference>
<dbReference type="PANTHER" id="PTHR34997:SF1">
    <property type="entry name" value="PEPTIDOGLYCAN-BINDING LYSIN DOMAIN"/>
    <property type="match status" value="1"/>
</dbReference>
<dbReference type="Pfam" id="PF01476">
    <property type="entry name" value="LysM"/>
    <property type="match status" value="4"/>
</dbReference>
<dbReference type="SMART" id="SM00257">
    <property type="entry name" value="LysM"/>
    <property type="match status" value="5"/>
</dbReference>
<dbReference type="SUPFAM" id="SSF54106">
    <property type="entry name" value="LysM domain"/>
    <property type="match status" value="4"/>
</dbReference>
<dbReference type="PROSITE" id="PS51782">
    <property type="entry name" value="LYSM"/>
    <property type="match status" value="5"/>
</dbReference>